<organism>
    <name type="scientific">Vibrio cholerae serotype O1 (strain M66-2)</name>
    <dbReference type="NCBI Taxonomy" id="579112"/>
    <lineage>
        <taxon>Bacteria</taxon>
        <taxon>Pseudomonadati</taxon>
        <taxon>Pseudomonadota</taxon>
        <taxon>Gammaproteobacteria</taxon>
        <taxon>Vibrionales</taxon>
        <taxon>Vibrionaceae</taxon>
        <taxon>Vibrio</taxon>
    </lineage>
</organism>
<sequence>MARAINSAYRSFINSSATDDRRTRMNAPRSLSALSTTANPALSTLVEQVCALIAPNWPLDRMIAVSPYWKRIDKPFAQAAAELKQLAASPMTMTLSDYHLRWQNKQIQSADLQQAIAEQNSDLSESTLIAALQQPTAPSHPWPLLCDTVDSRRDLEHHPAWNDAITHQISQFCAAYFDHHQADWSPDQQTGLFATWREAMIHDRSITLLLNETSVKQKATKLPEDAMAAIEQTLAQLAIAPAQQETYLQAVLMRISGWASWCAYLAWQAGFEGRHDEHLRDLLAIRLCWENLLDDGERGMGSVWLQWQQSWAPRQSCEEDRALRIALLWQRSAEIAYQRQLFAALTSAQESAPQSSYPEVQAAFCIDVRSEVIRRHLEAQSPHIQTLGFAGFFGLPIRYQLLGTEASRPQLPGLLAPSLIVSDSTGNEDQDAKLALRRRARLKRHFSWRAFHHLPASTFTLVETTGLAYLTKLLKRTLSYPALSASVERFAFTEHEWQSVKPQFTRDPQTLAQRAQMAANILRALGIATEQARLVLLVGHGSQTQNNPQRAGLDCGACCGQSGEVNARTLAALLNDQAVRQALPEYGISLRDDVHFIAALHNTTTEAMRLFDRHEIPTSHREALEQLDQQLTAASHGARQERAPSLELNHNHQAPPSKDNALSAQQLEQAFLRRAHDWAQTRPEWGLTNNAAFIIAPRQRSKQAKLDGRVFLHEYQPERDPEGQLLTQIMTAPMLVTHWINMQYFASTVDNRRFGSGNKTLHNVVGGNIGLFEGNGGDLRCGLALQSLHDGQGWRHEALRLTVVIDAPRERIEQVMASHRVVEHLVKHEWLYLARFADQGIEIYLQGTWQRITQPSSDSSAR</sequence>
<comment type="function">
    <text evidence="1">Part of an energy-coupled inorganic carbon pump.</text>
</comment>
<comment type="cofactor">
    <cofactor evidence="1">
        <name>Zn(2+)</name>
        <dbReference type="ChEBI" id="CHEBI:29105"/>
    </cofactor>
</comment>
<comment type="subunit">
    <text evidence="1">Forms a complex with DabB.</text>
</comment>
<comment type="subcellular location">
    <subcellularLocation>
        <location evidence="1">Cell inner membrane</location>
        <topology evidence="1">Peripheral membrane protein</topology>
    </subcellularLocation>
</comment>
<comment type="similarity">
    <text evidence="1">Belongs to the inorganic carbon transporter (TC 9.A.2) DabA family.</text>
</comment>
<gene>
    <name evidence="1" type="primary">dabA</name>
    <name type="ordered locus">VCM66_1522</name>
</gene>
<feature type="chain" id="PRO_0000387324" description="Probable inorganic carbon transporter subunit DabA">
    <location>
        <begin position="1"/>
        <end position="862"/>
    </location>
</feature>
<feature type="binding site" evidence="1">
    <location>
        <position position="365"/>
    </location>
    <ligand>
        <name>Zn(2+)</name>
        <dbReference type="ChEBI" id="CHEBI:29105"/>
    </ligand>
</feature>
<feature type="binding site" evidence="1">
    <location>
        <position position="367"/>
    </location>
    <ligand>
        <name>Zn(2+)</name>
        <dbReference type="ChEBI" id="CHEBI:29105"/>
    </ligand>
</feature>
<feature type="binding site" evidence="1">
    <location>
        <position position="540"/>
    </location>
    <ligand>
        <name>Zn(2+)</name>
        <dbReference type="ChEBI" id="CHEBI:29105"/>
    </ligand>
</feature>
<feature type="binding site" evidence="1">
    <location>
        <position position="555"/>
    </location>
    <ligand>
        <name>Zn(2+)</name>
        <dbReference type="ChEBI" id="CHEBI:29105"/>
    </ligand>
</feature>
<name>DABA_VIBCM</name>
<dbReference type="EMBL" id="CP001233">
    <property type="protein sequence ID" value="ACP05835.1"/>
    <property type="molecule type" value="Genomic_DNA"/>
</dbReference>
<dbReference type="KEGG" id="vcm:VCM66_1522"/>
<dbReference type="HOGENOM" id="CLU_009885_1_0_6"/>
<dbReference type="Proteomes" id="UP000001217">
    <property type="component" value="Chromosome I"/>
</dbReference>
<dbReference type="GO" id="GO:0005886">
    <property type="term" value="C:plasma membrane"/>
    <property type="evidence" value="ECO:0007669"/>
    <property type="project" value="UniProtKB-SubCell"/>
</dbReference>
<dbReference type="GO" id="GO:0008270">
    <property type="term" value="F:zinc ion binding"/>
    <property type="evidence" value="ECO:0007669"/>
    <property type="project" value="UniProtKB-UniRule"/>
</dbReference>
<dbReference type="HAMAP" id="MF_01871">
    <property type="entry name" value="DabA"/>
    <property type="match status" value="1"/>
</dbReference>
<dbReference type="InterPro" id="IPR018752">
    <property type="entry name" value="DabA"/>
</dbReference>
<dbReference type="PANTHER" id="PTHR38344:SF1">
    <property type="entry name" value="INORGANIC CARBON TRANSPORTER SUBUNIT DABA-RELATED"/>
    <property type="match status" value="1"/>
</dbReference>
<dbReference type="PANTHER" id="PTHR38344">
    <property type="entry name" value="UPF0753 PROTEIN AQ_863"/>
    <property type="match status" value="1"/>
</dbReference>
<dbReference type="Pfam" id="PF10070">
    <property type="entry name" value="DabA"/>
    <property type="match status" value="1"/>
</dbReference>
<proteinExistence type="inferred from homology"/>
<accession>C3LMQ9</accession>
<keyword id="KW-0997">Cell inner membrane</keyword>
<keyword id="KW-1003">Cell membrane</keyword>
<keyword id="KW-0472">Membrane</keyword>
<keyword id="KW-0479">Metal-binding</keyword>
<keyword id="KW-0813">Transport</keyword>
<keyword id="KW-0862">Zinc</keyword>
<evidence type="ECO:0000255" key="1">
    <source>
        <dbReference type="HAMAP-Rule" id="MF_01871"/>
    </source>
</evidence>
<reference key="1">
    <citation type="journal article" date="2008" name="PLoS ONE">
        <title>A recalibrated molecular clock and independent origins for the cholera pandemic clones.</title>
        <authorList>
            <person name="Feng L."/>
            <person name="Reeves P.R."/>
            <person name="Lan R."/>
            <person name="Ren Y."/>
            <person name="Gao C."/>
            <person name="Zhou Z."/>
            <person name="Ren Y."/>
            <person name="Cheng J."/>
            <person name="Wang W."/>
            <person name="Wang J."/>
            <person name="Qian W."/>
            <person name="Li D."/>
            <person name="Wang L."/>
        </authorList>
    </citation>
    <scope>NUCLEOTIDE SEQUENCE [LARGE SCALE GENOMIC DNA]</scope>
    <source>
        <strain>M66-2</strain>
    </source>
</reference>
<protein>
    <recommendedName>
        <fullName evidence="1">Probable inorganic carbon transporter subunit DabA</fullName>
    </recommendedName>
</protein>